<sequence length="226" mass="24741">MTLVLVIDDEPQILRALRINLTVRGYQVITASTGAGALRAAAEHPPDVVILDLGLPDMSGIDVLGGLRGWLTAPVIVLSARTDSSDKVQALDAGADDYVTKPFGMDEFLARLRAAVRRNTAAAELEQPVIETDSFTVDLAGKKVIKDGAEVHLTPTEWGMLEMLARNRGKLVGRGELLKEVWGPAYATETHYLRVYLAQLRRKLEDDPSHPKHLLTESGMGYRFEA</sequence>
<organism>
    <name type="scientific">Mycobacterium tuberculosis (strain ATCC 25618 / H37Rv)</name>
    <dbReference type="NCBI Taxonomy" id="83332"/>
    <lineage>
        <taxon>Bacteria</taxon>
        <taxon>Bacillati</taxon>
        <taxon>Actinomycetota</taxon>
        <taxon>Actinomycetes</taxon>
        <taxon>Mycobacteriales</taxon>
        <taxon>Mycobacteriaceae</taxon>
        <taxon>Mycobacterium</taxon>
        <taxon>Mycobacterium tuberculosis complex</taxon>
    </lineage>
</organism>
<comment type="function">
    <text evidence="5">Member of the two-component regulatory system KdpD/KdpE involved in the regulation of the kdp operon. Upon phosphorylation by KdpD, functions as a transcription regulator by direct binding to promoter regions of target genes to positively regulate their expression.</text>
</comment>
<comment type="subcellular location">
    <subcellularLocation>
        <location evidence="1">Cytoplasm</location>
    </subcellularLocation>
</comment>
<comment type="PTM">
    <text evidence="5">Phosphorylated by KdpD.</text>
</comment>
<comment type="disruption phenotype">
    <text evidence="4">Cells lacking KdpD and KdpE show an increase in virulence in mouse model of infection, with significantly shorter survival times.</text>
</comment>
<comment type="miscellaneous">
    <text>Was identified as a high-confidence drug target.</text>
</comment>
<gene>
    <name type="primary">kdpE</name>
    <name type="ordered locus">Rv1027c</name>
</gene>
<proteinExistence type="evidence at protein level"/>
<evidence type="ECO:0000250" key="1"/>
<evidence type="ECO:0000255" key="2">
    <source>
        <dbReference type="PROSITE-ProRule" id="PRU00169"/>
    </source>
</evidence>
<evidence type="ECO:0000255" key="3">
    <source>
        <dbReference type="PROSITE-ProRule" id="PRU01091"/>
    </source>
</evidence>
<evidence type="ECO:0000269" key="4">
    <source>
    </source>
</evidence>
<evidence type="ECO:0000269" key="5">
    <source>
    </source>
</evidence>
<feature type="chain" id="PRO_0000412199" description="Transcriptional regulatory protein KdpE">
    <location>
        <begin position="1"/>
        <end position="226"/>
    </location>
</feature>
<feature type="domain" description="Response regulatory" evidence="2">
    <location>
        <begin position="3"/>
        <end position="116"/>
    </location>
</feature>
<feature type="DNA-binding region" description="OmpR/PhoB-type" evidence="3">
    <location>
        <begin position="127"/>
        <end position="226"/>
    </location>
</feature>
<feature type="modified residue" description="4-aspartylphosphate" evidence="2 5">
    <location>
        <position position="52"/>
    </location>
</feature>
<feature type="mutagenesis site" description="Complete loss of phosphorylation." evidence="5">
    <original>D</original>
    <variation>N</variation>
    <location>
        <position position="52"/>
    </location>
</feature>
<protein>
    <recommendedName>
        <fullName>Transcriptional regulatory protein KdpE</fullName>
    </recommendedName>
</protein>
<dbReference type="EMBL" id="AL123456">
    <property type="protein sequence ID" value="CCP43777.1"/>
    <property type="molecule type" value="Genomic_DNA"/>
</dbReference>
<dbReference type="PIR" id="F70623">
    <property type="entry name" value="F70623"/>
</dbReference>
<dbReference type="RefSeq" id="NP_215543.1">
    <property type="nucleotide sequence ID" value="NC_000962.3"/>
</dbReference>
<dbReference type="RefSeq" id="WP_003405305.1">
    <property type="nucleotide sequence ID" value="NZ_NVQJ01000018.1"/>
</dbReference>
<dbReference type="SMR" id="P9WGN1"/>
<dbReference type="FunCoup" id="P9WGN1">
    <property type="interactions" value="90"/>
</dbReference>
<dbReference type="IntAct" id="P9WGN1">
    <property type="interactions" value="1"/>
</dbReference>
<dbReference type="STRING" id="83332.Rv1027c"/>
<dbReference type="PaxDb" id="83332-Rv1027c"/>
<dbReference type="DNASU" id="886046"/>
<dbReference type="GeneID" id="45424999"/>
<dbReference type="GeneID" id="886046"/>
<dbReference type="KEGG" id="mtu:Rv1027c"/>
<dbReference type="KEGG" id="mtv:RVBD_1027c"/>
<dbReference type="TubercuList" id="Rv1027c"/>
<dbReference type="eggNOG" id="COG0745">
    <property type="taxonomic scope" value="Bacteria"/>
</dbReference>
<dbReference type="InParanoid" id="P9WGN1"/>
<dbReference type="OrthoDB" id="9790442at2"/>
<dbReference type="PhylomeDB" id="P9WGN1"/>
<dbReference type="PHI-base" id="PHI:3619"/>
<dbReference type="Proteomes" id="UP000001584">
    <property type="component" value="Chromosome"/>
</dbReference>
<dbReference type="GO" id="GO:0005829">
    <property type="term" value="C:cytosol"/>
    <property type="evidence" value="ECO:0000318"/>
    <property type="project" value="GO_Central"/>
</dbReference>
<dbReference type="GO" id="GO:0032993">
    <property type="term" value="C:protein-DNA complex"/>
    <property type="evidence" value="ECO:0000318"/>
    <property type="project" value="GO_Central"/>
</dbReference>
<dbReference type="GO" id="GO:0000156">
    <property type="term" value="F:phosphorelay response regulator activity"/>
    <property type="evidence" value="ECO:0000318"/>
    <property type="project" value="GO_Central"/>
</dbReference>
<dbReference type="GO" id="GO:0000976">
    <property type="term" value="F:transcription cis-regulatory region binding"/>
    <property type="evidence" value="ECO:0000318"/>
    <property type="project" value="GO_Central"/>
</dbReference>
<dbReference type="GO" id="GO:0006355">
    <property type="term" value="P:regulation of DNA-templated transcription"/>
    <property type="evidence" value="ECO:0000318"/>
    <property type="project" value="GO_Central"/>
</dbReference>
<dbReference type="CDD" id="cd17620">
    <property type="entry name" value="REC_OmpR_KdpE-like"/>
    <property type="match status" value="1"/>
</dbReference>
<dbReference type="CDD" id="cd00383">
    <property type="entry name" value="trans_reg_C"/>
    <property type="match status" value="1"/>
</dbReference>
<dbReference type="FunFam" id="3.40.50.2300:FF:000021">
    <property type="entry name" value="Two-component system response regulator KdpE"/>
    <property type="match status" value="1"/>
</dbReference>
<dbReference type="FunFam" id="1.10.10.10:FF:000210">
    <property type="entry name" value="Winged-helix transcriptional response regulator KdpE"/>
    <property type="match status" value="1"/>
</dbReference>
<dbReference type="Gene3D" id="3.40.50.2300">
    <property type="match status" value="1"/>
</dbReference>
<dbReference type="Gene3D" id="6.10.250.690">
    <property type="match status" value="1"/>
</dbReference>
<dbReference type="Gene3D" id="1.10.10.10">
    <property type="entry name" value="Winged helix-like DNA-binding domain superfamily/Winged helix DNA-binding domain"/>
    <property type="match status" value="1"/>
</dbReference>
<dbReference type="InterPro" id="IPR011006">
    <property type="entry name" value="CheY-like_superfamily"/>
</dbReference>
<dbReference type="InterPro" id="IPR001867">
    <property type="entry name" value="OmpR/PhoB-type_DNA-bd"/>
</dbReference>
<dbReference type="InterPro" id="IPR001789">
    <property type="entry name" value="Sig_transdc_resp-reg_receiver"/>
</dbReference>
<dbReference type="InterPro" id="IPR039420">
    <property type="entry name" value="WalR-like"/>
</dbReference>
<dbReference type="InterPro" id="IPR036388">
    <property type="entry name" value="WH-like_DNA-bd_sf"/>
</dbReference>
<dbReference type="PANTHER" id="PTHR48111:SF50">
    <property type="entry name" value="KDP OPERON TRANSCRIPTIONAL REGULATORY PROTEIN KDPE"/>
    <property type="match status" value="1"/>
</dbReference>
<dbReference type="PANTHER" id="PTHR48111">
    <property type="entry name" value="REGULATOR OF RPOS"/>
    <property type="match status" value="1"/>
</dbReference>
<dbReference type="Pfam" id="PF00072">
    <property type="entry name" value="Response_reg"/>
    <property type="match status" value="1"/>
</dbReference>
<dbReference type="Pfam" id="PF00486">
    <property type="entry name" value="Trans_reg_C"/>
    <property type="match status" value="1"/>
</dbReference>
<dbReference type="SMART" id="SM00448">
    <property type="entry name" value="REC"/>
    <property type="match status" value="1"/>
</dbReference>
<dbReference type="SMART" id="SM00862">
    <property type="entry name" value="Trans_reg_C"/>
    <property type="match status" value="1"/>
</dbReference>
<dbReference type="SUPFAM" id="SSF52172">
    <property type="entry name" value="CheY-like"/>
    <property type="match status" value="1"/>
</dbReference>
<dbReference type="PROSITE" id="PS51755">
    <property type="entry name" value="OMPR_PHOB"/>
    <property type="match status" value="1"/>
</dbReference>
<dbReference type="PROSITE" id="PS50110">
    <property type="entry name" value="RESPONSE_REGULATORY"/>
    <property type="match status" value="1"/>
</dbReference>
<keyword id="KW-0963">Cytoplasm</keyword>
<keyword id="KW-0238">DNA-binding</keyword>
<keyword id="KW-0597">Phosphoprotein</keyword>
<keyword id="KW-1185">Reference proteome</keyword>
<keyword id="KW-0804">Transcription</keyword>
<keyword id="KW-0805">Transcription regulation</keyword>
<keyword id="KW-0902">Two-component regulatory system</keyword>
<reference key="1">
    <citation type="journal article" date="1998" name="Nature">
        <title>Deciphering the biology of Mycobacterium tuberculosis from the complete genome sequence.</title>
        <authorList>
            <person name="Cole S.T."/>
            <person name="Brosch R."/>
            <person name="Parkhill J."/>
            <person name="Garnier T."/>
            <person name="Churcher C.M."/>
            <person name="Harris D.E."/>
            <person name="Gordon S.V."/>
            <person name="Eiglmeier K."/>
            <person name="Gas S."/>
            <person name="Barry C.E. III"/>
            <person name="Tekaia F."/>
            <person name="Badcock K."/>
            <person name="Basham D."/>
            <person name="Brown D."/>
            <person name="Chillingworth T."/>
            <person name="Connor R."/>
            <person name="Davies R.M."/>
            <person name="Devlin K."/>
            <person name="Feltwell T."/>
            <person name="Gentles S."/>
            <person name="Hamlin N."/>
            <person name="Holroyd S."/>
            <person name="Hornsby T."/>
            <person name="Jagels K."/>
            <person name="Krogh A."/>
            <person name="McLean J."/>
            <person name="Moule S."/>
            <person name="Murphy L.D."/>
            <person name="Oliver S."/>
            <person name="Osborne J."/>
            <person name="Quail M.A."/>
            <person name="Rajandream M.A."/>
            <person name="Rogers J."/>
            <person name="Rutter S."/>
            <person name="Seeger K."/>
            <person name="Skelton S."/>
            <person name="Squares S."/>
            <person name="Squares R."/>
            <person name="Sulston J.E."/>
            <person name="Taylor K."/>
            <person name="Whitehead S."/>
            <person name="Barrell B.G."/>
        </authorList>
    </citation>
    <scope>NUCLEOTIDE SEQUENCE [LARGE SCALE GENOMIC DNA]</scope>
    <source>
        <strain>ATCC 25618 / H37Rv</strain>
    </source>
</reference>
<reference key="2">
    <citation type="journal article" date="2003" name="Infect. Immun.">
        <title>Deletion of two-component regulatory systems increases the virulence of Mycobacterium tuberculosis.</title>
        <authorList>
            <person name="Parish T."/>
            <person name="Smith D.A."/>
            <person name="Kendall S."/>
            <person name="Casali N."/>
            <person name="Bancroft G.J."/>
            <person name="Stoker N.G."/>
        </authorList>
    </citation>
    <scope>DISRUPTION PHENOTYPE</scope>
    <source>
        <strain>ATCC 25618 / H37Rv</strain>
    </source>
</reference>
<reference key="3">
    <citation type="journal article" date="2008" name="BMC Syst. Biol.">
        <title>targetTB: a target identification pipeline for Mycobacterium tuberculosis through an interactome, reactome and genome-scale structural analysis.</title>
        <authorList>
            <person name="Raman K."/>
            <person name="Yeturu K."/>
            <person name="Chandra N."/>
        </authorList>
    </citation>
    <scope>IDENTIFICATION AS A DRUG TARGET [LARGE SCALE ANALYSIS]</scope>
</reference>
<reference key="4">
    <citation type="journal article" date="2011" name="Mol. Cell. Proteomics">
        <title>Proteogenomic analysis of Mycobacterium tuberculosis by high resolution mass spectrometry.</title>
        <authorList>
            <person name="Kelkar D.S."/>
            <person name="Kumar D."/>
            <person name="Kumar P."/>
            <person name="Balakrishnan L."/>
            <person name="Muthusamy B."/>
            <person name="Yadav A.K."/>
            <person name="Shrivastava P."/>
            <person name="Marimuthu A."/>
            <person name="Anand S."/>
            <person name="Sundaram H."/>
            <person name="Kingsbury R."/>
            <person name="Harsha H.C."/>
            <person name="Nair B."/>
            <person name="Prasad T.S."/>
            <person name="Chauhan D.S."/>
            <person name="Katoch K."/>
            <person name="Katoch V.M."/>
            <person name="Kumar P."/>
            <person name="Chaerkady R."/>
            <person name="Ramachandran S."/>
            <person name="Dash D."/>
            <person name="Pandey A."/>
        </authorList>
    </citation>
    <scope>IDENTIFICATION BY MASS SPECTROMETRY [LARGE SCALE ANALYSIS]</scope>
    <source>
        <strain>ATCC 25618 / H37Rv</strain>
    </source>
</reference>
<reference key="5">
    <citation type="journal article" date="2014" name="Biochem. Biophys. Res. Commun.">
        <title>Rv1027c-Rv1028c encode functional KdpDE two--component system in Mycobacterium tuberculosis.</title>
        <authorList>
            <person name="Agrawal R."/>
            <person name="Saini D.K."/>
        </authorList>
    </citation>
    <scope>FUNCTION</scope>
    <scope>PHOSPHORYLATION AT ASP-52</scope>
    <scope>MUTAGENESIS OF ASP-52</scope>
</reference>
<name>KDPE_MYCTU</name>
<accession>P9WGN1</accession>
<accession>L0T8E7</accession>
<accession>P96373</accession>
<accession>Q7D8Z1</accession>